<evidence type="ECO:0000255" key="1">
    <source>
        <dbReference type="HAMAP-Rule" id="MF_00736"/>
    </source>
</evidence>
<evidence type="ECO:0000305" key="2"/>
<name>RL11_CUPNH</name>
<feature type="chain" id="PRO_1000046248" description="Large ribosomal subunit protein uL11">
    <location>
        <begin position="1"/>
        <end position="143"/>
    </location>
</feature>
<keyword id="KW-0488">Methylation</keyword>
<keyword id="KW-1185">Reference proteome</keyword>
<keyword id="KW-0687">Ribonucleoprotein</keyword>
<keyword id="KW-0689">Ribosomal protein</keyword>
<keyword id="KW-0694">RNA-binding</keyword>
<keyword id="KW-0699">rRNA-binding</keyword>
<reference key="1">
    <citation type="journal article" date="2006" name="Nat. Biotechnol.">
        <title>Genome sequence of the bioplastic-producing 'Knallgas' bacterium Ralstonia eutropha H16.</title>
        <authorList>
            <person name="Pohlmann A."/>
            <person name="Fricke W.F."/>
            <person name="Reinecke F."/>
            <person name="Kusian B."/>
            <person name="Liesegang H."/>
            <person name="Cramm R."/>
            <person name="Eitinger T."/>
            <person name="Ewering C."/>
            <person name="Poetter M."/>
            <person name="Schwartz E."/>
            <person name="Strittmatter A."/>
            <person name="Voss I."/>
            <person name="Gottschalk G."/>
            <person name="Steinbuechel A."/>
            <person name="Friedrich B."/>
            <person name="Bowien B."/>
        </authorList>
    </citation>
    <scope>NUCLEOTIDE SEQUENCE [LARGE SCALE GENOMIC DNA]</scope>
    <source>
        <strain>ATCC 17699 / DSM 428 / KCTC 22496 / NCIMB 10442 / H16 / Stanier 337</strain>
    </source>
</reference>
<comment type="function">
    <text evidence="1">Forms part of the ribosomal stalk which helps the ribosome interact with GTP-bound translation factors.</text>
</comment>
<comment type="subunit">
    <text evidence="1">Part of the ribosomal stalk of the 50S ribosomal subunit. Interacts with L10 and the large rRNA to form the base of the stalk. L10 forms an elongated spine to which L12 dimers bind in a sequential fashion forming a multimeric L10(L12)X complex.</text>
</comment>
<comment type="PTM">
    <text evidence="1">One or more lysine residues are methylated.</text>
</comment>
<comment type="similarity">
    <text evidence="1">Belongs to the universal ribosomal protein uL11 family.</text>
</comment>
<proteinExistence type="inferred from homology"/>
<gene>
    <name evidence="1" type="primary">rplK</name>
    <name type="ordered locus">H16_A3501</name>
</gene>
<protein>
    <recommendedName>
        <fullName evidence="1">Large ribosomal subunit protein uL11</fullName>
    </recommendedName>
    <alternativeName>
        <fullName evidence="2">50S ribosomal protein L11</fullName>
    </alternativeName>
</protein>
<organism>
    <name type="scientific">Cupriavidus necator (strain ATCC 17699 / DSM 428 / KCTC 22496 / NCIMB 10442 / H16 / Stanier 337)</name>
    <name type="common">Ralstonia eutropha</name>
    <dbReference type="NCBI Taxonomy" id="381666"/>
    <lineage>
        <taxon>Bacteria</taxon>
        <taxon>Pseudomonadati</taxon>
        <taxon>Pseudomonadota</taxon>
        <taxon>Betaproteobacteria</taxon>
        <taxon>Burkholderiales</taxon>
        <taxon>Burkholderiaceae</taxon>
        <taxon>Cupriavidus</taxon>
    </lineage>
</organism>
<dbReference type="EMBL" id="AM260479">
    <property type="protein sequence ID" value="CAJ94569.1"/>
    <property type="molecule type" value="Genomic_DNA"/>
</dbReference>
<dbReference type="RefSeq" id="WP_010810467.1">
    <property type="nucleotide sequence ID" value="NZ_CP039287.1"/>
</dbReference>
<dbReference type="SMR" id="Q0K602"/>
<dbReference type="STRING" id="381666.H16_A3501"/>
<dbReference type="GeneID" id="29760665"/>
<dbReference type="KEGG" id="reh:H16_A3501"/>
<dbReference type="eggNOG" id="COG0080">
    <property type="taxonomic scope" value="Bacteria"/>
</dbReference>
<dbReference type="HOGENOM" id="CLU_074237_2_0_4"/>
<dbReference type="OrthoDB" id="9802408at2"/>
<dbReference type="Proteomes" id="UP000008210">
    <property type="component" value="Chromosome 1"/>
</dbReference>
<dbReference type="GO" id="GO:0022625">
    <property type="term" value="C:cytosolic large ribosomal subunit"/>
    <property type="evidence" value="ECO:0007669"/>
    <property type="project" value="TreeGrafter"/>
</dbReference>
<dbReference type="GO" id="GO:0070180">
    <property type="term" value="F:large ribosomal subunit rRNA binding"/>
    <property type="evidence" value="ECO:0007669"/>
    <property type="project" value="UniProtKB-UniRule"/>
</dbReference>
<dbReference type="GO" id="GO:0003735">
    <property type="term" value="F:structural constituent of ribosome"/>
    <property type="evidence" value="ECO:0007669"/>
    <property type="project" value="InterPro"/>
</dbReference>
<dbReference type="GO" id="GO:0006412">
    <property type="term" value="P:translation"/>
    <property type="evidence" value="ECO:0007669"/>
    <property type="project" value="UniProtKB-UniRule"/>
</dbReference>
<dbReference type="CDD" id="cd00349">
    <property type="entry name" value="Ribosomal_L11"/>
    <property type="match status" value="1"/>
</dbReference>
<dbReference type="FunFam" id="1.10.10.250:FF:000001">
    <property type="entry name" value="50S ribosomal protein L11"/>
    <property type="match status" value="1"/>
</dbReference>
<dbReference type="FunFam" id="3.30.1550.10:FF:000001">
    <property type="entry name" value="50S ribosomal protein L11"/>
    <property type="match status" value="1"/>
</dbReference>
<dbReference type="Gene3D" id="1.10.10.250">
    <property type="entry name" value="Ribosomal protein L11, C-terminal domain"/>
    <property type="match status" value="1"/>
</dbReference>
<dbReference type="Gene3D" id="3.30.1550.10">
    <property type="entry name" value="Ribosomal protein L11/L12, N-terminal domain"/>
    <property type="match status" value="1"/>
</dbReference>
<dbReference type="HAMAP" id="MF_00736">
    <property type="entry name" value="Ribosomal_uL11"/>
    <property type="match status" value="1"/>
</dbReference>
<dbReference type="InterPro" id="IPR000911">
    <property type="entry name" value="Ribosomal_uL11"/>
</dbReference>
<dbReference type="InterPro" id="IPR006519">
    <property type="entry name" value="Ribosomal_uL11_bac-typ"/>
</dbReference>
<dbReference type="InterPro" id="IPR020783">
    <property type="entry name" value="Ribosomal_uL11_C"/>
</dbReference>
<dbReference type="InterPro" id="IPR036769">
    <property type="entry name" value="Ribosomal_uL11_C_sf"/>
</dbReference>
<dbReference type="InterPro" id="IPR020785">
    <property type="entry name" value="Ribosomal_uL11_CS"/>
</dbReference>
<dbReference type="InterPro" id="IPR020784">
    <property type="entry name" value="Ribosomal_uL11_N"/>
</dbReference>
<dbReference type="InterPro" id="IPR036796">
    <property type="entry name" value="Ribosomal_uL11_N_sf"/>
</dbReference>
<dbReference type="NCBIfam" id="TIGR01632">
    <property type="entry name" value="L11_bact"/>
    <property type="match status" value="1"/>
</dbReference>
<dbReference type="PANTHER" id="PTHR11661">
    <property type="entry name" value="60S RIBOSOMAL PROTEIN L12"/>
    <property type="match status" value="1"/>
</dbReference>
<dbReference type="PANTHER" id="PTHR11661:SF1">
    <property type="entry name" value="LARGE RIBOSOMAL SUBUNIT PROTEIN UL11M"/>
    <property type="match status" value="1"/>
</dbReference>
<dbReference type="Pfam" id="PF00298">
    <property type="entry name" value="Ribosomal_L11"/>
    <property type="match status" value="1"/>
</dbReference>
<dbReference type="Pfam" id="PF03946">
    <property type="entry name" value="Ribosomal_L11_N"/>
    <property type="match status" value="1"/>
</dbReference>
<dbReference type="SMART" id="SM00649">
    <property type="entry name" value="RL11"/>
    <property type="match status" value="1"/>
</dbReference>
<dbReference type="SUPFAM" id="SSF54747">
    <property type="entry name" value="Ribosomal L11/L12e N-terminal domain"/>
    <property type="match status" value="1"/>
</dbReference>
<dbReference type="SUPFAM" id="SSF46906">
    <property type="entry name" value="Ribosomal protein L11, C-terminal domain"/>
    <property type="match status" value="1"/>
</dbReference>
<dbReference type="PROSITE" id="PS00359">
    <property type="entry name" value="RIBOSOMAL_L11"/>
    <property type="match status" value="1"/>
</dbReference>
<accession>Q0K602</accession>
<sequence>MAKKIIGFIKLQIPAGKANPSPPVGPALGQRGLNIMEFCKAFNAQTQGMEPGLPVPVVITAFADKSFTFVMKSPPATVLIKKAAGITKGSPKPHTDKVGKITRAQAEEIAKAKNADLTAADLDAAVRTIAGSARSMGITVEGL</sequence>